<organism>
    <name type="scientific">Bacillus subtilis (strain 168)</name>
    <dbReference type="NCBI Taxonomy" id="224308"/>
    <lineage>
        <taxon>Bacteria</taxon>
        <taxon>Bacillati</taxon>
        <taxon>Bacillota</taxon>
        <taxon>Bacilli</taxon>
        <taxon>Bacillales</taxon>
        <taxon>Bacillaceae</taxon>
        <taxon>Bacillus</taxon>
    </lineage>
</organism>
<keyword id="KW-1185">Reference proteome</keyword>
<feature type="chain" id="PRO_0000172742" description="UPF0180 protein YkuS">
    <location>
        <begin position="1"/>
        <end position="81"/>
    </location>
</feature>
<reference key="1">
    <citation type="submission" date="1997-11" db="EMBL/GenBank/DDBJ databases">
        <title>Sequence of the Bacillus subtilis chromosome from ykuA to cse-15.</title>
        <authorList>
            <person name="Scanlan E."/>
            <person name="Devine K.M."/>
        </authorList>
    </citation>
    <scope>NUCLEOTIDE SEQUENCE [GENOMIC DNA]</scope>
    <source>
        <strain>168</strain>
    </source>
</reference>
<reference key="2">
    <citation type="journal article" date="1997" name="Nature">
        <title>The complete genome sequence of the Gram-positive bacterium Bacillus subtilis.</title>
        <authorList>
            <person name="Kunst F."/>
            <person name="Ogasawara N."/>
            <person name="Moszer I."/>
            <person name="Albertini A.M."/>
            <person name="Alloni G."/>
            <person name="Azevedo V."/>
            <person name="Bertero M.G."/>
            <person name="Bessieres P."/>
            <person name="Bolotin A."/>
            <person name="Borchert S."/>
            <person name="Borriss R."/>
            <person name="Boursier L."/>
            <person name="Brans A."/>
            <person name="Braun M."/>
            <person name="Brignell S.C."/>
            <person name="Bron S."/>
            <person name="Brouillet S."/>
            <person name="Bruschi C.V."/>
            <person name="Caldwell B."/>
            <person name="Capuano V."/>
            <person name="Carter N.M."/>
            <person name="Choi S.-K."/>
            <person name="Codani J.-J."/>
            <person name="Connerton I.F."/>
            <person name="Cummings N.J."/>
            <person name="Daniel R.A."/>
            <person name="Denizot F."/>
            <person name="Devine K.M."/>
            <person name="Duesterhoeft A."/>
            <person name="Ehrlich S.D."/>
            <person name="Emmerson P.T."/>
            <person name="Entian K.-D."/>
            <person name="Errington J."/>
            <person name="Fabret C."/>
            <person name="Ferrari E."/>
            <person name="Foulger D."/>
            <person name="Fritz C."/>
            <person name="Fujita M."/>
            <person name="Fujita Y."/>
            <person name="Fuma S."/>
            <person name="Galizzi A."/>
            <person name="Galleron N."/>
            <person name="Ghim S.-Y."/>
            <person name="Glaser P."/>
            <person name="Goffeau A."/>
            <person name="Golightly E.J."/>
            <person name="Grandi G."/>
            <person name="Guiseppi G."/>
            <person name="Guy B.J."/>
            <person name="Haga K."/>
            <person name="Haiech J."/>
            <person name="Harwood C.R."/>
            <person name="Henaut A."/>
            <person name="Hilbert H."/>
            <person name="Holsappel S."/>
            <person name="Hosono S."/>
            <person name="Hullo M.-F."/>
            <person name="Itaya M."/>
            <person name="Jones L.-M."/>
            <person name="Joris B."/>
            <person name="Karamata D."/>
            <person name="Kasahara Y."/>
            <person name="Klaerr-Blanchard M."/>
            <person name="Klein C."/>
            <person name="Kobayashi Y."/>
            <person name="Koetter P."/>
            <person name="Koningstein G."/>
            <person name="Krogh S."/>
            <person name="Kumano M."/>
            <person name="Kurita K."/>
            <person name="Lapidus A."/>
            <person name="Lardinois S."/>
            <person name="Lauber J."/>
            <person name="Lazarevic V."/>
            <person name="Lee S.-M."/>
            <person name="Levine A."/>
            <person name="Liu H."/>
            <person name="Masuda S."/>
            <person name="Mauel C."/>
            <person name="Medigue C."/>
            <person name="Medina N."/>
            <person name="Mellado R.P."/>
            <person name="Mizuno M."/>
            <person name="Moestl D."/>
            <person name="Nakai S."/>
            <person name="Noback M."/>
            <person name="Noone D."/>
            <person name="O'Reilly M."/>
            <person name="Ogawa K."/>
            <person name="Ogiwara A."/>
            <person name="Oudega B."/>
            <person name="Park S.-H."/>
            <person name="Parro V."/>
            <person name="Pohl T.M."/>
            <person name="Portetelle D."/>
            <person name="Porwollik S."/>
            <person name="Prescott A.M."/>
            <person name="Presecan E."/>
            <person name="Pujic P."/>
            <person name="Purnelle B."/>
            <person name="Rapoport G."/>
            <person name="Rey M."/>
            <person name="Reynolds S."/>
            <person name="Rieger M."/>
            <person name="Rivolta C."/>
            <person name="Rocha E."/>
            <person name="Roche B."/>
            <person name="Rose M."/>
            <person name="Sadaie Y."/>
            <person name="Sato T."/>
            <person name="Scanlan E."/>
            <person name="Schleich S."/>
            <person name="Schroeter R."/>
            <person name="Scoffone F."/>
            <person name="Sekiguchi J."/>
            <person name="Sekowska A."/>
            <person name="Seror S.J."/>
            <person name="Serror P."/>
            <person name="Shin B.-S."/>
            <person name="Soldo B."/>
            <person name="Sorokin A."/>
            <person name="Tacconi E."/>
            <person name="Takagi T."/>
            <person name="Takahashi H."/>
            <person name="Takemaru K."/>
            <person name="Takeuchi M."/>
            <person name="Tamakoshi A."/>
            <person name="Tanaka T."/>
            <person name="Terpstra P."/>
            <person name="Tognoni A."/>
            <person name="Tosato V."/>
            <person name="Uchiyama S."/>
            <person name="Vandenbol M."/>
            <person name="Vannier F."/>
            <person name="Vassarotti A."/>
            <person name="Viari A."/>
            <person name="Wambutt R."/>
            <person name="Wedler E."/>
            <person name="Wedler H."/>
            <person name="Weitzenegger T."/>
            <person name="Winters P."/>
            <person name="Wipat A."/>
            <person name="Yamamoto H."/>
            <person name="Yamane K."/>
            <person name="Yasumoto K."/>
            <person name="Yata K."/>
            <person name="Yoshida K."/>
            <person name="Yoshikawa H.-F."/>
            <person name="Zumstein E."/>
            <person name="Yoshikawa H."/>
            <person name="Danchin A."/>
        </authorList>
    </citation>
    <scope>NUCLEOTIDE SEQUENCE [LARGE SCALE GENOMIC DNA]</scope>
    <source>
        <strain>168</strain>
    </source>
</reference>
<comment type="similarity">
    <text evidence="1">Belongs to the UPF0180 family.</text>
</comment>
<evidence type="ECO:0000305" key="1"/>
<dbReference type="EMBL" id="AJ222587">
    <property type="protein sequence ID" value="CAA10882.1"/>
    <property type="molecule type" value="Genomic_DNA"/>
</dbReference>
<dbReference type="EMBL" id="AL009126">
    <property type="protein sequence ID" value="CAB13293.1"/>
    <property type="molecule type" value="Genomic_DNA"/>
</dbReference>
<dbReference type="PIR" id="H69866">
    <property type="entry name" value="H69866"/>
</dbReference>
<dbReference type="RefSeq" id="NP_389303.1">
    <property type="nucleotide sequence ID" value="NC_000964.3"/>
</dbReference>
<dbReference type="RefSeq" id="WP_003232382.1">
    <property type="nucleotide sequence ID" value="NZ_OZ025638.1"/>
</dbReference>
<dbReference type="FunCoup" id="O34783">
    <property type="interactions" value="59"/>
</dbReference>
<dbReference type="STRING" id="224308.BSU14200"/>
<dbReference type="PaxDb" id="224308-BSU14200"/>
<dbReference type="EnsemblBacteria" id="CAB13293">
    <property type="protein sequence ID" value="CAB13293"/>
    <property type="gene ID" value="BSU_14200"/>
</dbReference>
<dbReference type="GeneID" id="938799"/>
<dbReference type="KEGG" id="bsu:BSU14200"/>
<dbReference type="PATRIC" id="fig|224308.179.peg.1549"/>
<dbReference type="eggNOG" id="ENOG503307C">
    <property type="taxonomic scope" value="Bacteria"/>
</dbReference>
<dbReference type="InParanoid" id="O34783"/>
<dbReference type="OrthoDB" id="1708042at2"/>
<dbReference type="BioCyc" id="BSUB:BSU14200-MONOMER"/>
<dbReference type="Proteomes" id="UP000001570">
    <property type="component" value="Chromosome"/>
</dbReference>
<dbReference type="HAMAP" id="MF_00506">
    <property type="entry name" value="UPF0180"/>
    <property type="match status" value="1"/>
</dbReference>
<dbReference type="InterPro" id="IPR005370">
    <property type="entry name" value="UPF0180"/>
</dbReference>
<dbReference type="NCBIfam" id="NF002845">
    <property type="entry name" value="PRK03094.1"/>
    <property type="match status" value="1"/>
</dbReference>
<dbReference type="Pfam" id="PF03698">
    <property type="entry name" value="UPF0180"/>
    <property type="match status" value="1"/>
</dbReference>
<name>YKUS_BACSU</name>
<sequence length="81" mass="8494">MAKKIGIEQSLSDVEAALKEKGYDVVMMKSPADAQGCDCCVVTGLDNNVQGIADTVTQAPVITASGMTAEEICSEVESRIQ</sequence>
<protein>
    <recommendedName>
        <fullName>UPF0180 protein YkuS</fullName>
    </recommendedName>
</protein>
<gene>
    <name type="primary">ykuS</name>
    <name type="ordered locus">BSU14200</name>
</gene>
<proteinExistence type="inferred from homology"/>
<accession>O34783</accession>